<accession>P0C5D5</accession>
<accession>A2YAA1</accession>
<accession>A3B996</accession>
<accession>B7E468</accession>
<accession>Q69YA4</accession>
<gene>
    <name type="ordered locus">Os06g0196300</name>
    <name type="ordered locus">LOC_Os06g09610</name>
    <name type="ORF">OsJ_019618</name>
    <name type="ORF">P0528E04.23</name>
</gene>
<keyword id="KW-0049">Antioxidant</keyword>
<keyword id="KW-0150">Chloroplast</keyword>
<keyword id="KW-1015">Disulfide bond</keyword>
<keyword id="KW-0560">Oxidoreductase</keyword>
<keyword id="KW-0575">Peroxidase</keyword>
<keyword id="KW-0934">Plastid</keyword>
<keyword id="KW-0676">Redox-active center</keyword>
<keyword id="KW-1185">Reference proteome</keyword>
<keyword id="KW-0793">Thylakoid</keyword>
<keyword id="KW-0809">Transit peptide</keyword>
<sequence length="217" mass="23737">MAFAVSTACRPSLLLPPRQRSSPPRPRPLLCTPSTAAFRRGALSATTTPTPARAALPSTTGRNRIVCGKVSKGSAAPNFTLRDQDGRAVSLSKFKGRPVVVYFYPADETPGCTKQACAFRDSYEKFKKAGAEVIGISGDDAASHKEFKKKYKLPFTLLSDEGNKVRKEWGVPADLFGTLPGRQTYVLDKNGVVQYIYNNQFQPEKHIGETLKILQSL</sequence>
<organism>
    <name type="scientific">Oryza sativa subsp. japonica</name>
    <name type="common">Rice</name>
    <dbReference type="NCBI Taxonomy" id="39947"/>
    <lineage>
        <taxon>Eukaryota</taxon>
        <taxon>Viridiplantae</taxon>
        <taxon>Streptophyta</taxon>
        <taxon>Embryophyta</taxon>
        <taxon>Tracheophyta</taxon>
        <taxon>Spermatophyta</taxon>
        <taxon>Magnoliopsida</taxon>
        <taxon>Liliopsida</taxon>
        <taxon>Poales</taxon>
        <taxon>Poaceae</taxon>
        <taxon>BOP clade</taxon>
        <taxon>Oryzoideae</taxon>
        <taxon>Oryzeae</taxon>
        <taxon>Oryzinae</taxon>
        <taxon>Oryza</taxon>
        <taxon>Oryza sativa</taxon>
    </lineage>
</organism>
<comment type="function">
    <text evidence="2">Thiol-specific peroxidase that catalyzes the reduction of hydrogen peroxide and organic hydroperoxides to water and alcohols, respectively. Plays a role in cell protection against oxidative stress by detoxifying peroxides.</text>
</comment>
<comment type="catalytic activity">
    <reaction evidence="2">
        <text>a hydroperoxide + [thioredoxin]-dithiol = an alcohol + [thioredoxin]-disulfide + H2O</text>
        <dbReference type="Rhea" id="RHEA:62620"/>
        <dbReference type="Rhea" id="RHEA-COMP:10698"/>
        <dbReference type="Rhea" id="RHEA-COMP:10700"/>
        <dbReference type="ChEBI" id="CHEBI:15377"/>
        <dbReference type="ChEBI" id="CHEBI:29950"/>
        <dbReference type="ChEBI" id="CHEBI:30879"/>
        <dbReference type="ChEBI" id="CHEBI:35924"/>
        <dbReference type="ChEBI" id="CHEBI:50058"/>
        <dbReference type="EC" id="1.11.1.24"/>
    </reaction>
</comment>
<comment type="subunit">
    <text evidence="2">Monomer.</text>
</comment>
<comment type="subcellular location">
    <subcellularLocation>
        <location evidence="2">Plastid</location>
        <location evidence="2">Chloroplast thylakoid lumen</location>
    </subcellularLocation>
</comment>
<comment type="miscellaneous">
    <text evidence="1">The active site is a conserved redox-active cysteine residue, the peroxidatic cysteine (C(P)), which makes the nucleophilic attack on the peroxide substrate. The peroxide oxidizes the C(P)-SH to cysteine sulfenic acid (C(P)-SOH), which then reacts with another cysteine residue, the resolving cysteine (C(R)), to form a disulfide bridge. The disulfide is subsequently reduced by an appropriate electron donor to complete the catalytic cycle. In this atypical 2-Cys peroxiredoxin, C(R) is present in the same subunit to form an intramolecular disulfide. The disulfide is subsequently reduced by thioredoxin.</text>
</comment>
<comment type="similarity">
    <text evidence="5">Belongs to the peroxiredoxin family. BCP/PrxQ subfamily.</text>
</comment>
<proteinExistence type="evidence at transcript level"/>
<feature type="transit peptide" description="Chloroplast" evidence="3">
    <location>
        <begin position="1"/>
        <end position="66"/>
    </location>
</feature>
<feature type="chain" id="PRO_0000285111" description="Peroxiredoxin Q, chloroplastic">
    <location>
        <begin position="67"/>
        <end position="217"/>
    </location>
</feature>
<feature type="domain" description="Thioredoxin" evidence="4">
    <location>
        <begin position="70"/>
        <end position="217"/>
    </location>
</feature>
<feature type="active site" description="Cysteine sulfenic acid (-SOH) intermediate" evidence="1">
    <location>
        <position position="112"/>
    </location>
</feature>
<feature type="disulfide bond" description="Redox-active" evidence="1">
    <location>
        <begin position="112"/>
        <end position="117"/>
    </location>
</feature>
<protein>
    <recommendedName>
        <fullName>Peroxiredoxin Q, chloroplastic</fullName>
        <ecNumber evidence="2">1.11.1.24</ecNumber>
    </recommendedName>
    <alternativeName>
        <fullName>Thioredoxin peroxidase</fullName>
    </alternativeName>
    <alternativeName>
        <fullName evidence="5">Thioredoxin-dependent peroxiredoxin Q</fullName>
    </alternativeName>
</protein>
<reference key="1">
    <citation type="journal article" date="2005" name="Nature">
        <title>The map-based sequence of the rice genome.</title>
        <authorList>
            <consortium name="International rice genome sequencing project (IRGSP)"/>
        </authorList>
    </citation>
    <scope>NUCLEOTIDE SEQUENCE [LARGE SCALE GENOMIC DNA]</scope>
    <source>
        <strain>cv. Nipponbare</strain>
    </source>
</reference>
<reference key="2">
    <citation type="journal article" date="2008" name="Nucleic Acids Res.">
        <title>The rice annotation project database (RAP-DB): 2008 update.</title>
        <authorList>
            <consortium name="The rice annotation project (RAP)"/>
        </authorList>
    </citation>
    <scope>GENOME REANNOTATION</scope>
    <source>
        <strain>cv. Nipponbare</strain>
    </source>
</reference>
<reference key="3">
    <citation type="journal article" date="2013" name="Rice">
        <title>Improvement of the Oryza sativa Nipponbare reference genome using next generation sequence and optical map data.</title>
        <authorList>
            <person name="Kawahara Y."/>
            <person name="de la Bastide M."/>
            <person name="Hamilton J.P."/>
            <person name="Kanamori H."/>
            <person name="McCombie W.R."/>
            <person name="Ouyang S."/>
            <person name="Schwartz D.C."/>
            <person name="Tanaka T."/>
            <person name="Wu J."/>
            <person name="Zhou S."/>
            <person name="Childs K.L."/>
            <person name="Davidson R.M."/>
            <person name="Lin H."/>
            <person name="Quesada-Ocampo L."/>
            <person name="Vaillancourt B."/>
            <person name="Sakai H."/>
            <person name="Lee S.S."/>
            <person name="Kim J."/>
            <person name="Numa H."/>
            <person name="Itoh T."/>
            <person name="Buell C.R."/>
            <person name="Matsumoto T."/>
        </authorList>
    </citation>
    <scope>GENOME REANNOTATION</scope>
    <source>
        <strain>cv. Nipponbare</strain>
    </source>
</reference>
<reference key="4">
    <citation type="journal article" date="2005" name="PLoS Biol.">
        <title>The genomes of Oryza sativa: a history of duplications.</title>
        <authorList>
            <person name="Yu J."/>
            <person name="Wang J."/>
            <person name="Lin W."/>
            <person name="Li S."/>
            <person name="Li H."/>
            <person name="Zhou J."/>
            <person name="Ni P."/>
            <person name="Dong W."/>
            <person name="Hu S."/>
            <person name="Zeng C."/>
            <person name="Zhang J."/>
            <person name="Zhang Y."/>
            <person name="Li R."/>
            <person name="Xu Z."/>
            <person name="Li S."/>
            <person name="Li X."/>
            <person name="Zheng H."/>
            <person name="Cong L."/>
            <person name="Lin L."/>
            <person name="Yin J."/>
            <person name="Geng J."/>
            <person name="Li G."/>
            <person name="Shi J."/>
            <person name="Liu J."/>
            <person name="Lv H."/>
            <person name="Li J."/>
            <person name="Wang J."/>
            <person name="Deng Y."/>
            <person name="Ran L."/>
            <person name="Shi X."/>
            <person name="Wang X."/>
            <person name="Wu Q."/>
            <person name="Li C."/>
            <person name="Ren X."/>
            <person name="Wang J."/>
            <person name="Wang X."/>
            <person name="Li D."/>
            <person name="Liu D."/>
            <person name="Zhang X."/>
            <person name="Ji Z."/>
            <person name="Zhao W."/>
            <person name="Sun Y."/>
            <person name="Zhang Z."/>
            <person name="Bao J."/>
            <person name="Han Y."/>
            <person name="Dong L."/>
            <person name="Ji J."/>
            <person name="Chen P."/>
            <person name="Wu S."/>
            <person name="Liu J."/>
            <person name="Xiao Y."/>
            <person name="Bu D."/>
            <person name="Tan J."/>
            <person name="Yang L."/>
            <person name="Ye C."/>
            <person name="Zhang J."/>
            <person name="Xu J."/>
            <person name="Zhou Y."/>
            <person name="Yu Y."/>
            <person name="Zhang B."/>
            <person name="Zhuang S."/>
            <person name="Wei H."/>
            <person name="Liu B."/>
            <person name="Lei M."/>
            <person name="Yu H."/>
            <person name="Li Y."/>
            <person name="Xu H."/>
            <person name="Wei S."/>
            <person name="He X."/>
            <person name="Fang L."/>
            <person name="Zhang Z."/>
            <person name="Zhang Y."/>
            <person name="Huang X."/>
            <person name="Su Z."/>
            <person name="Tong W."/>
            <person name="Li J."/>
            <person name="Tong Z."/>
            <person name="Li S."/>
            <person name="Ye J."/>
            <person name="Wang L."/>
            <person name="Fang L."/>
            <person name="Lei T."/>
            <person name="Chen C.-S."/>
            <person name="Chen H.-C."/>
            <person name="Xu Z."/>
            <person name="Li H."/>
            <person name="Huang H."/>
            <person name="Zhang F."/>
            <person name="Xu H."/>
            <person name="Li N."/>
            <person name="Zhao C."/>
            <person name="Li S."/>
            <person name="Dong L."/>
            <person name="Huang Y."/>
            <person name="Li L."/>
            <person name="Xi Y."/>
            <person name="Qi Q."/>
            <person name="Li W."/>
            <person name="Zhang B."/>
            <person name="Hu W."/>
            <person name="Zhang Y."/>
            <person name="Tian X."/>
            <person name="Jiao Y."/>
            <person name="Liang X."/>
            <person name="Jin J."/>
            <person name="Gao L."/>
            <person name="Zheng W."/>
            <person name="Hao B."/>
            <person name="Liu S.-M."/>
            <person name="Wang W."/>
            <person name="Yuan L."/>
            <person name="Cao M."/>
            <person name="McDermott J."/>
            <person name="Samudrala R."/>
            <person name="Wang J."/>
            <person name="Wong G.K.-S."/>
            <person name="Yang H."/>
        </authorList>
    </citation>
    <scope>NUCLEOTIDE SEQUENCE [LARGE SCALE GENOMIC DNA]</scope>
    <source>
        <strain>cv. Nipponbare</strain>
    </source>
</reference>
<reference key="5">
    <citation type="journal article" date="2003" name="Science">
        <title>Collection, mapping, and annotation of over 28,000 cDNA clones from japonica rice.</title>
        <authorList>
            <consortium name="The rice full-length cDNA consortium"/>
        </authorList>
    </citation>
    <scope>NUCLEOTIDE SEQUENCE [LARGE SCALE MRNA]</scope>
    <source>
        <strain>cv. Nipponbare</strain>
    </source>
</reference>
<evidence type="ECO:0000250" key="1">
    <source>
        <dbReference type="UniProtKB" id="P0AE52"/>
    </source>
</evidence>
<evidence type="ECO:0000250" key="2">
    <source>
        <dbReference type="UniProtKB" id="Q9LU86"/>
    </source>
</evidence>
<evidence type="ECO:0000255" key="3"/>
<evidence type="ECO:0000255" key="4">
    <source>
        <dbReference type="PROSITE-ProRule" id="PRU00691"/>
    </source>
</evidence>
<evidence type="ECO:0000305" key="5"/>
<dbReference type="EC" id="1.11.1.24" evidence="2"/>
<dbReference type="EMBL" id="AP003510">
    <property type="protein sequence ID" value="BAD35223.1"/>
    <property type="molecule type" value="Genomic_DNA"/>
</dbReference>
<dbReference type="EMBL" id="AP008212">
    <property type="protein sequence ID" value="BAF18966.1"/>
    <property type="molecule type" value="Genomic_DNA"/>
</dbReference>
<dbReference type="EMBL" id="AP014962">
    <property type="protein sequence ID" value="BAS96613.1"/>
    <property type="molecule type" value="Genomic_DNA"/>
</dbReference>
<dbReference type="EMBL" id="CM000143">
    <property type="status" value="NOT_ANNOTATED_CDS"/>
    <property type="molecule type" value="Genomic_DNA"/>
</dbReference>
<dbReference type="EMBL" id="AK059845">
    <property type="protein sequence ID" value="BAG87165.1"/>
    <property type="molecule type" value="mRNA"/>
</dbReference>
<dbReference type="RefSeq" id="XP_015641442.1">
    <property type="nucleotide sequence ID" value="XM_015785956.1"/>
</dbReference>
<dbReference type="SMR" id="P0C5D5"/>
<dbReference type="FunCoup" id="P0C5D5">
    <property type="interactions" value="898"/>
</dbReference>
<dbReference type="STRING" id="39947.P0C5D5"/>
<dbReference type="PeroxiBase" id="4021">
    <property type="entry name" value="OsPrxQ"/>
</dbReference>
<dbReference type="PaxDb" id="39947-P0C5D5"/>
<dbReference type="EnsemblPlants" id="Os06t0196300-01">
    <property type="protein sequence ID" value="Os06t0196300-01"/>
    <property type="gene ID" value="Os06g0196300"/>
</dbReference>
<dbReference type="EnsemblPlants" id="Os06t0196300-02">
    <property type="protein sequence ID" value="Os06t0196300-02"/>
    <property type="gene ID" value="Os06g0196300"/>
</dbReference>
<dbReference type="Gramene" id="Os06t0196300-01">
    <property type="protein sequence ID" value="Os06t0196300-01"/>
    <property type="gene ID" value="Os06g0196300"/>
</dbReference>
<dbReference type="Gramene" id="Os06t0196300-02">
    <property type="protein sequence ID" value="Os06t0196300-02"/>
    <property type="gene ID" value="Os06g0196300"/>
</dbReference>
<dbReference type="KEGG" id="dosa:Os06g0196300"/>
<dbReference type="eggNOG" id="KOG0855">
    <property type="taxonomic scope" value="Eukaryota"/>
</dbReference>
<dbReference type="HOGENOM" id="CLU_042529_14_2_1"/>
<dbReference type="InParanoid" id="P0C5D5"/>
<dbReference type="OMA" id="CTAQLCD"/>
<dbReference type="OrthoDB" id="338622at2759"/>
<dbReference type="Proteomes" id="UP000000763">
    <property type="component" value="Chromosome 6"/>
</dbReference>
<dbReference type="Proteomes" id="UP000007752">
    <property type="component" value="Chromosome 6"/>
</dbReference>
<dbReference type="Proteomes" id="UP000059680">
    <property type="component" value="Chromosome 6"/>
</dbReference>
<dbReference type="GO" id="GO:0009543">
    <property type="term" value="C:chloroplast thylakoid lumen"/>
    <property type="evidence" value="ECO:0007669"/>
    <property type="project" value="UniProtKB-SubCell"/>
</dbReference>
<dbReference type="GO" id="GO:0009535">
    <property type="term" value="C:chloroplast thylakoid membrane"/>
    <property type="evidence" value="ECO:0000318"/>
    <property type="project" value="GO_Central"/>
</dbReference>
<dbReference type="GO" id="GO:0005737">
    <property type="term" value="C:cytoplasm"/>
    <property type="evidence" value="ECO:0000318"/>
    <property type="project" value="GO_Central"/>
</dbReference>
<dbReference type="GO" id="GO:0008379">
    <property type="term" value="F:thioredoxin peroxidase activity"/>
    <property type="evidence" value="ECO:0000318"/>
    <property type="project" value="GO_Central"/>
</dbReference>
<dbReference type="GO" id="GO:0045454">
    <property type="term" value="P:cell redox homeostasis"/>
    <property type="evidence" value="ECO:0000318"/>
    <property type="project" value="GO_Central"/>
</dbReference>
<dbReference type="GO" id="GO:0034599">
    <property type="term" value="P:cellular response to oxidative stress"/>
    <property type="evidence" value="ECO:0000318"/>
    <property type="project" value="GO_Central"/>
</dbReference>
<dbReference type="CDD" id="cd03017">
    <property type="entry name" value="PRX_BCP"/>
    <property type="match status" value="1"/>
</dbReference>
<dbReference type="FunFam" id="3.40.30.10:FF:000122">
    <property type="entry name" value="Peroxiredoxin Q chloroplastic"/>
    <property type="match status" value="1"/>
</dbReference>
<dbReference type="Gene3D" id="3.40.30.10">
    <property type="entry name" value="Glutaredoxin"/>
    <property type="match status" value="1"/>
</dbReference>
<dbReference type="InterPro" id="IPR000866">
    <property type="entry name" value="AhpC/TSA"/>
</dbReference>
<dbReference type="InterPro" id="IPR050924">
    <property type="entry name" value="Peroxiredoxin_BCP/PrxQ"/>
</dbReference>
<dbReference type="InterPro" id="IPR036249">
    <property type="entry name" value="Thioredoxin-like_sf"/>
</dbReference>
<dbReference type="InterPro" id="IPR013766">
    <property type="entry name" value="Thioredoxin_domain"/>
</dbReference>
<dbReference type="PANTHER" id="PTHR42801:SF4">
    <property type="entry name" value="AHPC_TSA FAMILY PROTEIN"/>
    <property type="match status" value="1"/>
</dbReference>
<dbReference type="PANTHER" id="PTHR42801">
    <property type="entry name" value="THIOREDOXIN-DEPENDENT PEROXIDE REDUCTASE"/>
    <property type="match status" value="1"/>
</dbReference>
<dbReference type="Pfam" id="PF00578">
    <property type="entry name" value="AhpC-TSA"/>
    <property type="match status" value="1"/>
</dbReference>
<dbReference type="SUPFAM" id="SSF52833">
    <property type="entry name" value="Thioredoxin-like"/>
    <property type="match status" value="1"/>
</dbReference>
<dbReference type="PROSITE" id="PS51352">
    <property type="entry name" value="THIOREDOXIN_2"/>
    <property type="match status" value="1"/>
</dbReference>
<name>PRXQ_ORYSJ</name>